<keyword id="KW-0963">Cytoplasm</keyword>
<keyword id="KW-0251">Elongation factor</keyword>
<keyword id="KW-0648">Protein biosynthesis</keyword>
<keyword id="KW-1185">Reference proteome</keyword>
<dbReference type="EMBL" id="CP000961">
    <property type="protein sequence ID" value="ACA87550.1"/>
    <property type="molecule type" value="Genomic_DNA"/>
</dbReference>
<dbReference type="RefSeq" id="WP_012325886.1">
    <property type="nucleotide sequence ID" value="NC_010506.1"/>
</dbReference>
<dbReference type="SMR" id="B1KNU2"/>
<dbReference type="STRING" id="392500.Swoo_3280"/>
<dbReference type="KEGG" id="swd:Swoo_3280"/>
<dbReference type="eggNOG" id="COG0264">
    <property type="taxonomic scope" value="Bacteria"/>
</dbReference>
<dbReference type="HOGENOM" id="CLU_047155_0_2_6"/>
<dbReference type="Proteomes" id="UP000002168">
    <property type="component" value="Chromosome"/>
</dbReference>
<dbReference type="GO" id="GO:0005737">
    <property type="term" value="C:cytoplasm"/>
    <property type="evidence" value="ECO:0007669"/>
    <property type="project" value="UniProtKB-SubCell"/>
</dbReference>
<dbReference type="GO" id="GO:0003746">
    <property type="term" value="F:translation elongation factor activity"/>
    <property type="evidence" value="ECO:0007669"/>
    <property type="project" value="UniProtKB-UniRule"/>
</dbReference>
<dbReference type="CDD" id="cd14275">
    <property type="entry name" value="UBA_EF-Ts"/>
    <property type="match status" value="1"/>
</dbReference>
<dbReference type="FunFam" id="1.10.286.20:FF:000001">
    <property type="entry name" value="Elongation factor Ts"/>
    <property type="match status" value="1"/>
</dbReference>
<dbReference type="FunFam" id="1.10.8.10:FF:000001">
    <property type="entry name" value="Elongation factor Ts"/>
    <property type="match status" value="1"/>
</dbReference>
<dbReference type="FunFam" id="3.30.479.20:FF:000001">
    <property type="entry name" value="Elongation factor Ts"/>
    <property type="match status" value="1"/>
</dbReference>
<dbReference type="Gene3D" id="1.10.286.20">
    <property type="match status" value="1"/>
</dbReference>
<dbReference type="Gene3D" id="1.10.8.10">
    <property type="entry name" value="DNA helicase RuvA subunit, C-terminal domain"/>
    <property type="match status" value="1"/>
</dbReference>
<dbReference type="Gene3D" id="3.30.479.20">
    <property type="entry name" value="Elongation factor Ts, dimerisation domain"/>
    <property type="match status" value="2"/>
</dbReference>
<dbReference type="HAMAP" id="MF_00050">
    <property type="entry name" value="EF_Ts"/>
    <property type="match status" value="1"/>
</dbReference>
<dbReference type="InterPro" id="IPR036402">
    <property type="entry name" value="EF-Ts_dimer_sf"/>
</dbReference>
<dbReference type="InterPro" id="IPR001816">
    <property type="entry name" value="Transl_elong_EFTs/EF1B"/>
</dbReference>
<dbReference type="InterPro" id="IPR014039">
    <property type="entry name" value="Transl_elong_EFTs/EF1B_dimer"/>
</dbReference>
<dbReference type="InterPro" id="IPR018101">
    <property type="entry name" value="Transl_elong_Ts_CS"/>
</dbReference>
<dbReference type="InterPro" id="IPR009060">
    <property type="entry name" value="UBA-like_sf"/>
</dbReference>
<dbReference type="NCBIfam" id="TIGR00116">
    <property type="entry name" value="tsf"/>
    <property type="match status" value="1"/>
</dbReference>
<dbReference type="PANTHER" id="PTHR11741">
    <property type="entry name" value="ELONGATION FACTOR TS"/>
    <property type="match status" value="1"/>
</dbReference>
<dbReference type="PANTHER" id="PTHR11741:SF0">
    <property type="entry name" value="ELONGATION FACTOR TS, MITOCHONDRIAL"/>
    <property type="match status" value="1"/>
</dbReference>
<dbReference type="Pfam" id="PF00889">
    <property type="entry name" value="EF_TS"/>
    <property type="match status" value="1"/>
</dbReference>
<dbReference type="SUPFAM" id="SSF54713">
    <property type="entry name" value="Elongation factor Ts (EF-Ts), dimerisation domain"/>
    <property type="match status" value="2"/>
</dbReference>
<dbReference type="SUPFAM" id="SSF46934">
    <property type="entry name" value="UBA-like"/>
    <property type="match status" value="1"/>
</dbReference>
<dbReference type="PROSITE" id="PS01126">
    <property type="entry name" value="EF_TS_1"/>
    <property type="match status" value="1"/>
</dbReference>
<dbReference type="PROSITE" id="PS01127">
    <property type="entry name" value="EF_TS_2"/>
    <property type="match status" value="1"/>
</dbReference>
<sequence>MAITAAQVKELRDRTGAGMMDCKKALTETAGDIELAIDNMRKSGAAKAAKKAGNIAAEGTILIKNGEGYAALLEVNCQTDFVAKDSNFLAFANEVLDVAAASKVTIEDLKAQFEETRVALVAKIGENINVRRVEYIDGANLAQYRHGERIGVVVTGEADEETLKHVAMHVAASKPEYVNPSDVPAEVVEKEKALQIEIAMNEGKPAEIAEKMVIGRMKKFTGEVSLTGQAYIMEPKKTVGEVLKEKGASVSNFIRLEVGEGIERKEEDFAAEVAAQIAATKA</sequence>
<comment type="function">
    <text evidence="1">Associates with the EF-Tu.GDP complex and induces the exchange of GDP to GTP. It remains bound to the aminoacyl-tRNA.EF-Tu.GTP complex up to the GTP hydrolysis stage on the ribosome.</text>
</comment>
<comment type="subcellular location">
    <subcellularLocation>
        <location evidence="1">Cytoplasm</location>
    </subcellularLocation>
</comment>
<comment type="similarity">
    <text evidence="1">Belongs to the EF-Ts family.</text>
</comment>
<protein>
    <recommendedName>
        <fullName evidence="1">Elongation factor Ts</fullName>
        <shortName evidence="1">EF-Ts</shortName>
    </recommendedName>
</protein>
<accession>B1KNU2</accession>
<name>EFTS_SHEWM</name>
<gene>
    <name evidence="1" type="primary">tsf</name>
    <name type="ordered locus">Swoo_3280</name>
</gene>
<proteinExistence type="inferred from homology"/>
<organism>
    <name type="scientific">Shewanella woodyi (strain ATCC 51908 / MS32)</name>
    <dbReference type="NCBI Taxonomy" id="392500"/>
    <lineage>
        <taxon>Bacteria</taxon>
        <taxon>Pseudomonadati</taxon>
        <taxon>Pseudomonadota</taxon>
        <taxon>Gammaproteobacteria</taxon>
        <taxon>Alteromonadales</taxon>
        <taxon>Shewanellaceae</taxon>
        <taxon>Shewanella</taxon>
    </lineage>
</organism>
<evidence type="ECO:0000255" key="1">
    <source>
        <dbReference type="HAMAP-Rule" id="MF_00050"/>
    </source>
</evidence>
<reference key="1">
    <citation type="submission" date="2008-02" db="EMBL/GenBank/DDBJ databases">
        <title>Complete sequence of Shewanella woodyi ATCC 51908.</title>
        <authorList>
            <consortium name="US DOE Joint Genome Institute"/>
            <person name="Copeland A."/>
            <person name="Lucas S."/>
            <person name="Lapidus A."/>
            <person name="Glavina del Rio T."/>
            <person name="Dalin E."/>
            <person name="Tice H."/>
            <person name="Bruce D."/>
            <person name="Goodwin L."/>
            <person name="Pitluck S."/>
            <person name="Sims D."/>
            <person name="Brettin T."/>
            <person name="Detter J.C."/>
            <person name="Han C."/>
            <person name="Kuske C.R."/>
            <person name="Schmutz J."/>
            <person name="Larimer F."/>
            <person name="Land M."/>
            <person name="Hauser L."/>
            <person name="Kyrpides N."/>
            <person name="Lykidis A."/>
            <person name="Zhao J.-S."/>
            <person name="Richardson P."/>
        </authorList>
    </citation>
    <scope>NUCLEOTIDE SEQUENCE [LARGE SCALE GENOMIC DNA]</scope>
    <source>
        <strain>ATCC 51908 / MS32</strain>
    </source>
</reference>
<feature type="chain" id="PRO_1000116790" description="Elongation factor Ts">
    <location>
        <begin position="1"/>
        <end position="282"/>
    </location>
</feature>
<feature type="region of interest" description="Involved in Mg(2+) ion dislocation from EF-Tu" evidence="1">
    <location>
        <begin position="79"/>
        <end position="82"/>
    </location>
</feature>